<accession>Q5NDE8</accession>
<organism>
    <name type="scientific">Gallus gallus</name>
    <name type="common">Chicken</name>
    <dbReference type="NCBI Taxonomy" id="9031"/>
    <lineage>
        <taxon>Eukaryota</taxon>
        <taxon>Metazoa</taxon>
        <taxon>Chordata</taxon>
        <taxon>Craniata</taxon>
        <taxon>Vertebrata</taxon>
        <taxon>Euteleostomi</taxon>
        <taxon>Archelosauria</taxon>
        <taxon>Archosauria</taxon>
        <taxon>Dinosauria</taxon>
        <taxon>Saurischia</taxon>
        <taxon>Theropoda</taxon>
        <taxon>Coelurosauria</taxon>
        <taxon>Aves</taxon>
        <taxon>Neognathae</taxon>
        <taxon>Galloanserae</taxon>
        <taxon>Galliformes</taxon>
        <taxon>Phasianidae</taxon>
        <taxon>Phasianinae</taxon>
        <taxon>Gallus</taxon>
    </lineage>
</organism>
<comment type="function">
    <text evidence="1">O-linked mannose beta-1,4-N-acetylglucosaminyltransferase that transfers UDP-N-acetyl-D-glucosamine to the 4-position of the mannose to generate N-acetyl-D-glucosamine-beta-1,4-O-D-mannosylprotein. Involved in the biosynthesis of the phosphorylated O-mannosyl trisaccharide (N-acetylgalactosamine-beta-3-N-acetylglucosamine-beta-4-(phosphate-6-)mannose), a carbohydrate structure present in alpha-dystroglycan (DAG1), which is required for binding laminin G-like domain-containing extracellular proteins with high affinity (By similarity).</text>
</comment>
<comment type="catalytic activity">
    <reaction evidence="1">
        <text>3-O-(alpha-D-mannosyl)-L-threonyl-[protein] + UDP-N-acetyl-alpha-D-glucosamine = 3-O-(N-acetyl-beta-D-glucosaminyl-(1-&gt;4)-alpha-D-mannosyl)-L-threonyl-[protein] + UDP + H(+)</text>
        <dbReference type="Rhea" id="RHEA:37663"/>
        <dbReference type="Rhea" id="RHEA-COMP:13547"/>
        <dbReference type="Rhea" id="RHEA-COMP:13618"/>
        <dbReference type="ChEBI" id="CHEBI:15378"/>
        <dbReference type="ChEBI" id="CHEBI:57705"/>
        <dbReference type="ChEBI" id="CHEBI:58223"/>
        <dbReference type="ChEBI" id="CHEBI:137323"/>
        <dbReference type="ChEBI" id="CHEBI:137540"/>
        <dbReference type="EC" id="2.4.1.312"/>
    </reaction>
</comment>
<comment type="pathway">
    <text evidence="1">Protein modification; protein glycosylation.</text>
</comment>
<comment type="subcellular location">
    <subcellularLocation>
        <location evidence="1">Endoplasmic reticulum membrane</location>
        <topology evidence="1">Single-pass type II membrane protein</topology>
    </subcellularLocation>
</comment>
<comment type="similarity">
    <text evidence="4">Belongs to the glycosyltransferase 61 family.</text>
</comment>
<dbReference type="EC" id="2.4.1.312" evidence="1"/>
<dbReference type="EMBL" id="AJ868536">
    <property type="protein sequence ID" value="CAI30870.1"/>
    <property type="molecule type" value="mRNA"/>
</dbReference>
<dbReference type="RefSeq" id="NP_001012294.1">
    <property type="nucleotide sequence ID" value="NM_001012294.2"/>
</dbReference>
<dbReference type="RefSeq" id="NP_001385282.1">
    <property type="nucleotide sequence ID" value="NM_001398353.1"/>
</dbReference>
<dbReference type="RefSeq" id="NP_001385283.1">
    <property type="nucleotide sequence ID" value="NM_001398354.1"/>
</dbReference>
<dbReference type="RefSeq" id="XP_015137060.1">
    <property type="nucleotide sequence ID" value="XM_015281574.1"/>
</dbReference>
<dbReference type="RefSeq" id="XP_015137061.1">
    <property type="nucleotide sequence ID" value="XM_015281575.1"/>
</dbReference>
<dbReference type="RefSeq" id="XP_015137062.1">
    <property type="nucleotide sequence ID" value="XM_015281576.1"/>
</dbReference>
<dbReference type="SMR" id="Q5NDE8"/>
<dbReference type="FunCoup" id="Q5NDE8">
    <property type="interactions" value="255"/>
</dbReference>
<dbReference type="STRING" id="9031.ENSGALP00000067430"/>
<dbReference type="CAZy" id="GT61">
    <property type="family name" value="Glycosyltransferase Family 61"/>
</dbReference>
<dbReference type="GlyCosmos" id="Q5NDE8">
    <property type="glycosylation" value="4 sites, No reported glycans"/>
</dbReference>
<dbReference type="GlyGen" id="Q5NDE8">
    <property type="glycosylation" value="4 sites"/>
</dbReference>
<dbReference type="PaxDb" id="9031-ENSGALP00000018758"/>
<dbReference type="Ensembl" id="ENSGALT00010039681.1">
    <property type="protein sequence ID" value="ENSGALP00010022940.1"/>
    <property type="gene ID" value="ENSGALG00010016471.1"/>
</dbReference>
<dbReference type="Ensembl" id="ENSGALT00010039683.1">
    <property type="protein sequence ID" value="ENSGALP00010022942.1"/>
    <property type="gene ID" value="ENSGALG00010016471.1"/>
</dbReference>
<dbReference type="Ensembl" id="ENSGALT00010039686.1">
    <property type="protein sequence ID" value="ENSGALP00010022945.1"/>
    <property type="gene ID" value="ENSGALG00010016471.1"/>
</dbReference>
<dbReference type="Ensembl" id="ENSGALT00010039690.1">
    <property type="protein sequence ID" value="ENSGALP00010022949.1"/>
    <property type="gene ID" value="ENSGALG00010016471.1"/>
</dbReference>
<dbReference type="Ensembl" id="ENSGALT00010039694.1">
    <property type="protein sequence ID" value="ENSGALP00010022953.1"/>
    <property type="gene ID" value="ENSGALG00010016471.1"/>
</dbReference>
<dbReference type="Ensembl" id="ENSGALT00010039698.1">
    <property type="protein sequence ID" value="ENSGALP00010022957.1"/>
    <property type="gene ID" value="ENSGALG00010016471.1"/>
</dbReference>
<dbReference type="Ensembl" id="ENSGALT00010039703.1">
    <property type="protein sequence ID" value="ENSGALP00010022962.1"/>
    <property type="gene ID" value="ENSGALG00010016471.1"/>
</dbReference>
<dbReference type="Ensembl" id="ENSGALT00010039708.1">
    <property type="protein sequence ID" value="ENSGALP00010022967.1"/>
    <property type="gene ID" value="ENSGALG00010016471.1"/>
</dbReference>
<dbReference type="Ensembl" id="ENSGALT00010039712.1">
    <property type="protein sequence ID" value="ENSGALP00010022970.1"/>
    <property type="gene ID" value="ENSGALG00010016471.1"/>
</dbReference>
<dbReference type="Ensembl" id="ENSGALT00010039720.1">
    <property type="protein sequence ID" value="ENSGALP00010022978.1"/>
    <property type="gene ID" value="ENSGALG00010016471.1"/>
</dbReference>
<dbReference type="GeneID" id="428446"/>
<dbReference type="KEGG" id="gga:428446"/>
<dbReference type="CTD" id="84892"/>
<dbReference type="VEuPathDB" id="HostDB:geneid_428446"/>
<dbReference type="eggNOG" id="KOG4698">
    <property type="taxonomic scope" value="Eukaryota"/>
</dbReference>
<dbReference type="GeneTree" id="ENSGT00940000160695"/>
<dbReference type="HOGENOM" id="CLU_020169_0_0_1"/>
<dbReference type="InParanoid" id="Q5NDE8"/>
<dbReference type="OMA" id="EFQMRVV"/>
<dbReference type="OrthoDB" id="529273at2759"/>
<dbReference type="PhylomeDB" id="Q5NDE8"/>
<dbReference type="TreeFam" id="TF332712"/>
<dbReference type="Reactome" id="R-GGA-5173105">
    <property type="pathway name" value="O-linked glycosylation"/>
</dbReference>
<dbReference type="UniPathway" id="UPA00378"/>
<dbReference type="PRO" id="PR:Q5NDE8"/>
<dbReference type="Proteomes" id="UP000000539">
    <property type="component" value="Chromosome 2"/>
</dbReference>
<dbReference type="Bgee" id="ENSGALG00000011518">
    <property type="expression patterns" value="Expressed in brain and 13 other cell types or tissues"/>
</dbReference>
<dbReference type="GO" id="GO:0005783">
    <property type="term" value="C:endoplasmic reticulum"/>
    <property type="evidence" value="ECO:0000250"/>
    <property type="project" value="UniProtKB"/>
</dbReference>
<dbReference type="GO" id="GO:0005789">
    <property type="term" value="C:endoplasmic reticulum membrane"/>
    <property type="evidence" value="ECO:0007669"/>
    <property type="project" value="UniProtKB-SubCell"/>
</dbReference>
<dbReference type="GO" id="GO:0008375">
    <property type="term" value="F:acetylglucosaminyltransferase activity"/>
    <property type="evidence" value="ECO:0000250"/>
    <property type="project" value="UniProtKB"/>
</dbReference>
<dbReference type="GO" id="GO:0097363">
    <property type="term" value="F:protein O-acetylglucosaminyltransferase activity"/>
    <property type="evidence" value="ECO:0000318"/>
    <property type="project" value="GO_Central"/>
</dbReference>
<dbReference type="GO" id="GO:0001764">
    <property type="term" value="P:neuron migration"/>
    <property type="evidence" value="ECO:0000250"/>
    <property type="project" value="UniProtKB"/>
</dbReference>
<dbReference type="GO" id="GO:0006493">
    <property type="term" value="P:protein O-linked glycosylation"/>
    <property type="evidence" value="ECO:0000250"/>
    <property type="project" value="UniProtKB"/>
</dbReference>
<dbReference type="GO" id="GO:0035269">
    <property type="term" value="P:protein O-linked mannosylation"/>
    <property type="evidence" value="ECO:0000250"/>
    <property type="project" value="UniProtKB"/>
</dbReference>
<dbReference type="FunFam" id="2.60.40.10:FF:001371">
    <property type="entry name" value="Protein O-linked mannose N-acetylglucosaminyltransferase 2 (beta 1,4-)"/>
    <property type="match status" value="1"/>
</dbReference>
<dbReference type="Gene3D" id="2.60.40.10">
    <property type="entry name" value="Immunoglobulins"/>
    <property type="match status" value="1"/>
</dbReference>
<dbReference type="InterPro" id="IPR003961">
    <property type="entry name" value="FN3_dom"/>
</dbReference>
<dbReference type="InterPro" id="IPR036116">
    <property type="entry name" value="FN3_sf"/>
</dbReference>
<dbReference type="InterPro" id="IPR049625">
    <property type="entry name" value="Glyco_transf_61_cat"/>
</dbReference>
<dbReference type="InterPro" id="IPR007657">
    <property type="entry name" value="Glycosyltransferase_61"/>
</dbReference>
<dbReference type="InterPro" id="IPR013783">
    <property type="entry name" value="Ig-like_fold"/>
</dbReference>
<dbReference type="PANTHER" id="PTHR20961">
    <property type="entry name" value="GLYCOSYLTRANSFERASE"/>
    <property type="match status" value="1"/>
</dbReference>
<dbReference type="PANTHER" id="PTHR20961:SF38">
    <property type="entry name" value="PROTEIN O-LINKED-MANNOSE BETA-1,4-N-ACETYLGLUCOSAMINYLTRANSFERASE 2"/>
    <property type="match status" value="1"/>
</dbReference>
<dbReference type="Pfam" id="PF04577">
    <property type="entry name" value="Glyco_transf_61"/>
    <property type="match status" value="1"/>
</dbReference>
<dbReference type="SUPFAM" id="SSF49265">
    <property type="entry name" value="Fibronectin type III"/>
    <property type="match status" value="1"/>
</dbReference>
<dbReference type="PROSITE" id="PS50853">
    <property type="entry name" value="FN3"/>
    <property type="match status" value="1"/>
</dbReference>
<sequence length="577" mass="66754">MNIAAVFNALLVSVLATVLWKYIKLREHAFMVEEELVLMRQSQELSQVQIDYHAALQTLLEDGTRMVCTGRMHTDRICRFESLCYSTEAEEFIYFHSNSSVMLPNLGSRRFQPALLDLSSVEDHNTQYFNFVELPAAALKFMPKPVFVPDVALIANRFNPDNLMHVFHDDLLPIYYTMQQFTDLDPETRLFFMEGWSEGVHFDLYKLLSNKQPLLREQLKTLGRLLCFTKSYVGLSKITTWYQYGFVQPQGPKANILVSGNEIRQFTKFMMQKLNVSLEESSSEEYIVVFSRTINRLILNEAELILALAQEFQMKTITVSLEEHSFSDIVRLISNASMLVSMHGAQLVMSLFLPRGATVVELFPYAINPEHYTPYKTLATLPGMDLQYIAWQNTAREDTVTYPDRPWDQGGIAHLDKAEQERIIKSTEVPRHLCCRNPEWLFRAYQDTKVDIPSLIHVIRQTVKSKPGPKKKWSGSLYPGKVRDARCQASVQGTSEARLSVSWQVPWNLKYLKVREVKYEVWIQEQGENTYMPYILSHQNHTFSENIKPFTIYLVWIRCIFNKNLLGPFADVLLCST</sequence>
<name>PMGT2_CHICK</name>
<gene>
    <name type="primary">POMGNT2</name>
    <name type="synonym">AGO61</name>
    <name type="synonym">GTDC2</name>
</gene>
<feature type="chain" id="PRO_0000249018" description="Protein O-linked-mannose beta-1,4-N-acetylglucosaminyltransferase 2">
    <location>
        <begin position="1"/>
        <end position="577"/>
    </location>
</feature>
<feature type="topological domain" description="Cytoplasmic" evidence="2">
    <location>
        <begin position="1"/>
        <end position="4"/>
    </location>
</feature>
<feature type="transmembrane region" description="Helical; Signal-anchor for type II membrane protein" evidence="2">
    <location>
        <begin position="5"/>
        <end position="25"/>
    </location>
</feature>
<feature type="topological domain" description="Lumenal" evidence="2">
    <location>
        <begin position="26"/>
        <end position="577"/>
    </location>
</feature>
<feature type="domain" description="Fibronectin type-III" evidence="3">
    <location>
        <begin position="481"/>
        <end position="577"/>
    </location>
</feature>
<feature type="glycosylation site" description="N-linked (GlcNAc...) asparagine" evidence="2">
    <location>
        <position position="98"/>
    </location>
</feature>
<feature type="glycosylation site" description="N-linked (GlcNAc...) asparagine" evidence="2">
    <location>
        <position position="275"/>
    </location>
</feature>
<feature type="glycosylation site" description="N-linked (GlcNAc...) asparagine" evidence="2">
    <location>
        <position position="335"/>
    </location>
</feature>
<feature type="glycosylation site" description="N-linked (GlcNAc...) asparagine" evidence="2">
    <location>
        <position position="540"/>
    </location>
</feature>
<evidence type="ECO:0000250" key="1">
    <source>
        <dbReference type="UniProtKB" id="Q8NAT1"/>
    </source>
</evidence>
<evidence type="ECO:0000255" key="2"/>
<evidence type="ECO:0000255" key="3">
    <source>
        <dbReference type="PROSITE-ProRule" id="PRU00316"/>
    </source>
</evidence>
<evidence type="ECO:0000305" key="4"/>
<proteinExistence type="evidence at transcript level"/>
<reference key="1">
    <citation type="submission" date="2004-12" db="EMBL/GenBank/DDBJ databases">
        <title>Phylogeny of xylosyltransferases.</title>
        <authorList>
            <person name="Kiefer-Meyer M.C."/>
            <person name="Pagny S."/>
            <person name="Durambure G."/>
            <person name="Faye L."/>
            <person name="Gomord V."/>
            <person name="Mollicone R."/>
            <person name="Oriol R."/>
        </authorList>
    </citation>
    <scope>NUCLEOTIDE SEQUENCE [MRNA]</scope>
</reference>
<keyword id="KW-0256">Endoplasmic reticulum</keyword>
<keyword id="KW-0325">Glycoprotein</keyword>
<keyword id="KW-0328">Glycosyltransferase</keyword>
<keyword id="KW-0472">Membrane</keyword>
<keyword id="KW-1185">Reference proteome</keyword>
<keyword id="KW-0735">Signal-anchor</keyword>
<keyword id="KW-0808">Transferase</keyword>
<keyword id="KW-0812">Transmembrane</keyword>
<keyword id="KW-1133">Transmembrane helix</keyword>
<protein>
    <recommendedName>
        <fullName>Protein O-linked-mannose beta-1,4-N-acetylglucosaminyltransferase 2</fullName>
        <shortName>POMGnT2</shortName>
        <ecNumber evidence="1">2.4.1.312</ecNumber>
    </recommendedName>
    <alternativeName>
        <fullName>Extracellular O-linked N-acetylglucosamine transferase-like</fullName>
    </alternativeName>
    <alternativeName>
        <fullName>Glycosyltransferase-like domain-containing protein 2</fullName>
    </alternativeName>
</protein>